<proteinExistence type="inferred from homology"/>
<name>DNAT_SALNS</name>
<protein>
    <recommendedName>
        <fullName evidence="1">Replication restart protein DnaT</fullName>
    </recommendedName>
</protein>
<sequence length="179" mass="19506">MSSRILTSDVIGIDVLLHDHHAVLAKSTGGAVAVFANNAPAFYAVTPARMAELLALEEKLSRPGSDVALDAQFYEEPEAAPVAIPCGKFAMYPAWQPDADFQRQAALWGVALREPVTAEELAAFIAYWQAEGKVFHHIQWQQKLARSVQISRSSNGGMPQRDINSVSEPDNHIPPGFRG</sequence>
<accession>B4T4E9</accession>
<keyword id="KW-0235">DNA replication</keyword>
<keyword id="KW-0238">DNA-binding</keyword>
<keyword id="KW-0639">Primosome</keyword>
<feature type="chain" id="PRO_1000136442" description="Replication restart protein DnaT">
    <location>
        <begin position="1"/>
        <end position="179"/>
    </location>
</feature>
<feature type="region of interest" description="Disordered" evidence="2">
    <location>
        <begin position="151"/>
        <end position="179"/>
    </location>
</feature>
<feature type="compositionally biased region" description="Polar residues" evidence="2">
    <location>
        <begin position="151"/>
        <end position="168"/>
    </location>
</feature>
<reference key="1">
    <citation type="journal article" date="2011" name="J. Bacteriol.">
        <title>Comparative genomics of 28 Salmonella enterica isolates: evidence for CRISPR-mediated adaptive sublineage evolution.</title>
        <authorList>
            <person name="Fricke W.F."/>
            <person name="Mammel M.K."/>
            <person name="McDermott P.F."/>
            <person name="Tartera C."/>
            <person name="White D.G."/>
            <person name="Leclerc J.E."/>
            <person name="Ravel J."/>
            <person name="Cebula T.A."/>
        </authorList>
    </citation>
    <scope>NUCLEOTIDE SEQUENCE [LARGE SCALE GENOMIC DNA]</scope>
    <source>
        <strain>SL254</strain>
    </source>
</reference>
<evidence type="ECO:0000255" key="1">
    <source>
        <dbReference type="HAMAP-Rule" id="MF_01061"/>
    </source>
</evidence>
<evidence type="ECO:0000256" key="2">
    <source>
        <dbReference type="SAM" id="MobiDB-lite"/>
    </source>
</evidence>
<organism>
    <name type="scientific">Salmonella newport (strain SL254)</name>
    <dbReference type="NCBI Taxonomy" id="423368"/>
    <lineage>
        <taxon>Bacteria</taxon>
        <taxon>Pseudomonadati</taxon>
        <taxon>Pseudomonadota</taxon>
        <taxon>Gammaproteobacteria</taxon>
        <taxon>Enterobacterales</taxon>
        <taxon>Enterobacteriaceae</taxon>
        <taxon>Salmonella</taxon>
    </lineage>
</organism>
<comment type="function">
    <text evidence="1">Involved in the restart of stalled replication forks, which reloads the replicative helicase on sites other than the origin of replication. Can function in multiple replication restart pathways. Displaces ssDNA from a PriB-ssDNA complex. Probably forms a spiral filament on ssDNA.</text>
</comment>
<comment type="subunit">
    <text evidence="1">Homooligomerizes. Interacts with PriB. Component of the replication restart primosome. Primosome assembly occurs via a 'hand-off' mechanism. PriA binds to replication forks, subsequently PriB then DnaT bind; DnaT then displaces ssDNA to generate the helicase loading substrate.</text>
</comment>
<comment type="similarity">
    <text evidence="1">Belongs to the DnaT family.</text>
</comment>
<dbReference type="EMBL" id="CP001113">
    <property type="protein sequence ID" value="ACF63726.1"/>
    <property type="molecule type" value="Genomic_DNA"/>
</dbReference>
<dbReference type="RefSeq" id="WP_000098578.1">
    <property type="nucleotide sequence ID" value="NZ_CCMR01000003.1"/>
</dbReference>
<dbReference type="SMR" id="B4T4E9"/>
<dbReference type="KEGG" id="see:SNSL254_A4899"/>
<dbReference type="HOGENOM" id="CLU_1501592_0_0_6"/>
<dbReference type="Proteomes" id="UP000008824">
    <property type="component" value="Chromosome"/>
</dbReference>
<dbReference type="GO" id="GO:1990077">
    <property type="term" value="C:primosome complex"/>
    <property type="evidence" value="ECO:0007669"/>
    <property type="project" value="UniProtKB-KW"/>
</dbReference>
<dbReference type="GO" id="GO:0006269">
    <property type="term" value="P:DNA replication, synthesis of primer"/>
    <property type="evidence" value="ECO:0007669"/>
    <property type="project" value="UniProtKB-UniRule"/>
</dbReference>
<dbReference type="Gene3D" id="1.10.8.1180">
    <property type="match status" value="1"/>
</dbReference>
<dbReference type="HAMAP" id="MF_01061">
    <property type="entry name" value="DnaT"/>
    <property type="match status" value="1"/>
</dbReference>
<dbReference type="InterPro" id="IPR020917">
    <property type="entry name" value="DnaT"/>
</dbReference>
<dbReference type="InterPro" id="IPR040480">
    <property type="entry name" value="DnaT_DNA_bind"/>
</dbReference>
<dbReference type="NCBIfam" id="NF002770">
    <property type="entry name" value="PRK02854.1"/>
    <property type="match status" value="1"/>
</dbReference>
<dbReference type="Pfam" id="PF17948">
    <property type="entry name" value="DnaT"/>
    <property type="match status" value="1"/>
</dbReference>
<gene>
    <name evidence="1" type="primary">dnaT</name>
    <name type="ordered locus">SNSL254_A4899</name>
</gene>